<dbReference type="EC" id="2.7.7.75" evidence="3"/>
<dbReference type="EMBL" id="X67700">
    <property type="protein sequence ID" value="CAA47930.1"/>
    <property type="molecule type" value="Genomic_DNA"/>
</dbReference>
<dbReference type="EMBL" id="U00096">
    <property type="protein sequence ID" value="AAC73120.1"/>
    <property type="molecule type" value="Genomic_DNA"/>
</dbReference>
<dbReference type="EMBL" id="AP009048">
    <property type="protein sequence ID" value="BAB96587.2"/>
    <property type="molecule type" value="Genomic_DNA"/>
</dbReference>
<dbReference type="PIR" id="B56688">
    <property type="entry name" value="B56688"/>
</dbReference>
<dbReference type="RefSeq" id="NP_414550.1">
    <property type="nucleotide sequence ID" value="NC_000913.3"/>
</dbReference>
<dbReference type="RefSeq" id="WP_001295414.1">
    <property type="nucleotide sequence ID" value="NZ_LN832404.1"/>
</dbReference>
<dbReference type="PDB" id="1DI6">
    <property type="method" value="X-ray"/>
    <property type="resolution" value="1.45 A"/>
    <property type="chains" value="A=3-195"/>
</dbReference>
<dbReference type="PDB" id="1DI7">
    <property type="method" value="X-ray"/>
    <property type="resolution" value="1.60 A"/>
    <property type="chains" value="A=3-195"/>
</dbReference>
<dbReference type="PDBsum" id="1DI6"/>
<dbReference type="PDBsum" id="1DI7"/>
<dbReference type="SMR" id="P0AF03"/>
<dbReference type="BioGRID" id="4261931">
    <property type="interactions" value="19"/>
</dbReference>
<dbReference type="BioGRID" id="849162">
    <property type="interactions" value="1"/>
</dbReference>
<dbReference type="DIP" id="DIP-35784N"/>
<dbReference type="FunCoup" id="P0AF03">
    <property type="interactions" value="340"/>
</dbReference>
<dbReference type="IntAct" id="P0AF03">
    <property type="interactions" value="9"/>
</dbReference>
<dbReference type="STRING" id="511145.b0009"/>
<dbReference type="jPOST" id="P0AF03"/>
<dbReference type="PaxDb" id="511145-b0009"/>
<dbReference type="EnsemblBacteria" id="AAC73120">
    <property type="protein sequence ID" value="AAC73120"/>
    <property type="gene ID" value="b0009"/>
</dbReference>
<dbReference type="GeneID" id="75169908"/>
<dbReference type="GeneID" id="944760"/>
<dbReference type="KEGG" id="ecj:JW0008"/>
<dbReference type="KEGG" id="eco:b0009"/>
<dbReference type="KEGG" id="ecoc:C3026_00050"/>
<dbReference type="PATRIC" id="fig|1411691.4.peg.2274"/>
<dbReference type="EchoBASE" id="EB1473"/>
<dbReference type="eggNOG" id="COG0521">
    <property type="taxonomic scope" value="Bacteria"/>
</dbReference>
<dbReference type="HOGENOM" id="CLU_077358_1_0_6"/>
<dbReference type="InParanoid" id="P0AF03"/>
<dbReference type="OMA" id="PYIETNA"/>
<dbReference type="OrthoDB" id="9784492at2"/>
<dbReference type="PhylomeDB" id="P0AF03"/>
<dbReference type="BioCyc" id="EcoCyc:EG11511-MONOMER"/>
<dbReference type="BioCyc" id="MetaCyc:EG11511-MONOMER"/>
<dbReference type="BRENDA" id="2.7.7.75">
    <property type="organism ID" value="2026"/>
</dbReference>
<dbReference type="UniPathway" id="UPA00344"/>
<dbReference type="EvolutionaryTrace" id="P0AF03"/>
<dbReference type="PRO" id="PR:P0AF03"/>
<dbReference type="Proteomes" id="UP000000625">
    <property type="component" value="Chromosome"/>
</dbReference>
<dbReference type="GO" id="GO:0005829">
    <property type="term" value="C:cytosol"/>
    <property type="evidence" value="ECO:0000314"/>
    <property type="project" value="EcoCyc"/>
</dbReference>
<dbReference type="GO" id="GO:0005524">
    <property type="term" value="F:ATP binding"/>
    <property type="evidence" value="ECO:0007669"/>
    <property type="project" value="UniProtKB-KW"/>
</dbReference>
<dbReference type="GO" id="GO:0042802">
    <property type="term" value="F:identical protein binding"/>
    <property type="evidence" value="ECO:0000353"/>
    <property type="project" value="EcoCyc"/>
</dbReference>
<dbReference type="GO" id="GO:0061598">
    <property type="term" value="F:molybdopterin adenylyltransferase activity"/>
    <property type="evidence" value="ECO:0000314"/>
    <property type="project" value="EcoCyc"/>
</dbReference>
<dbReference type="GO" id="GO:0006777">
    <property type="term" value="P:Mo-molybdopterin cofactor biosynthetic process"/>
    <property type="evidence" value="ECO:0007669"/>
    <property type="project" value="UniProtKB-KW"/>
</dbReference>
<dbReference type="GO" id="GO:0032324">
    <property type="term" value="P:molybdopterin cofactor biosynthetic process"/>
    <property type="evidence" value="ECO:0000314"/>
    <property type="project" value="EcoCyc"/>
</dbReference>
<dbReference type="CDD" id="cd00886">
    <property type="entry name" value="MogA_MoaB"/>
    <property type="match status" value="1"/>
</dbReference>
<dbReference type="FunFam" id="3.40.980.10:FF:000005">
    <property type="entry name" value="Molybdopterin biosynthesis mog protein"/>
    <property type="match status" value="1"/>
</dbReference>
<dbReference type="Gene3D" id="3.40.980.10">
    <property type="entry name" value="MoaB/Mog-like domain"/>
    <property type="match status" value="1"/>
</dbReference>
<dbReference type="InterPro" id="IPR036425">
    <property type="entry name" value="MoaB/Mog-like_dom_sf"/>
</dbReference>
<dbReference type="InterPro" id="IPR001453">
    <property type="entry name" value="MoaB/Mog_dom"/>
</dbReference>
<dbReference type="InterPro" id="IPR008284">
    <property type="entry name" value="MoCF_biosynth_CS"/>
</dbReference>
<dbReference type="InterPro" id="IPR051920">
    <property type="entry name" value="MPT_Adenylyltrnsfr/MoaC-Rel"/>
</dbReference>
<dbReference type="NCBIfam" id="TIGR00177">
    <property type="entry name" value="molyb_syn"/>
    <property type="match status" value="1"/>
</dbReference>
<dbReference type="NCBIfam" id="NF006932">
    <property type="entry name" value="PRK09417.1"/>
    <property type="match status" value="1"/>
</dbReference>
<dbReference type="PANTHER" id="PTHR43764">
    <property type="entry name" value="MOLYBDENUM COFACTOR BIOSYNTHESIS"/>
    <property type="match status" value="1"/>
</dbReference>
<dbReference type="PANTHER" id="PTHR43764:SF1">
    <property type="entry name" value="MOLYBDOPTERIN MOLYBDOTRANSFERASE"/>
    <property type="match status" value="1"/>
</dbReference>
<dbReference type="Pfam" id="PF00994">
    <property type="entry name" value="MoCF_biosynth"/>
    <property type="match status" value="1"/>
</dbReference>
<dbReference type="SMART" id="SM00852">
    <property type="entry name" value="MoCF_biosynth"/>
    <property type="match status" value="1"/>
</dbReference>
<dbReference type="SUPFAM" id="SSF53218">
    <property type="entry name" value="Molybdenum cofactor biosynthesis proteins"/>
    <property type="match status" value="1"/>
</dbReference>
<dbReference type="PROSITE" id="PS01078">
    <property type="entry name" value="MOCF_BIOSYNTHESIS_1"/>
    <property type="match status" value="1"/>
</dbReference>
<comment type="function">
    <text evidence="3">Catalyzes the adenylation of molybdopterin as part of the biosynthesis of the molybdenum-cofactor.</text>
</comment>
<comment type="catalytic activity">
    <reaction evidence="3">
        <text>molybdopterin + ATP + H(+) = adenylyl-molybdopterin + diphosphate</text>
        <dbReference type="Rhea" id="RHEA:31331"/>
        <dbReference type="ChEBI" id="CHEBI:15378"/>
        <dbReference type="ChEBI" id="CHEBI:30616"/>
        <dbReference type="ChEBI" id="CHEBI:33019"/>
        <dbReference type="ChEBI" id="CHEBI:58698"/>
        <dbReference type="ChEBI" id="CHEBI:62727"/>
        <dbReference type="EC" id="2.7.7.75"/>
    </reaction>
</comment>
<comment type="pathway">
    <text>Cofactor biosynthesis; molybdopterin biosynthesis.</text>
</comment>
<comment type="subunit">
    <text evidence="1 2">Homotrimer. Interacts with MoeA and MobB in vivo.</text>
</comment>
<comment type="similarity">
    <text evidence="4">Belongs to the MoaB/Mog family.</text>
</comment>
<keyword id="KW-0002">3D-structure</keyword>
<keyword id="KW-0067">ATP-binding</keyword>
<keyword id="KW-0501">Molybdenum cofactor biosynthesis</keyword>
<keyword id="KW-0547">Nucleotide-binding</keyword>
<keyword id="KW-1185">Reference proteome</keyword>
<keyword id="KW-0808">Transferase</keyword>
<sequence length="195" mass="21222">MNTLRIGLVSISDRASSGVYQDKGIPALEEWLTSALTTPFELETRLIPDEQAIIEQTLCELVDEMSCHLVLTTGGTGPARRDVTPDATLAVADREMPGFGEQMRQISLHFVPTAILSRQVGVIRKQALILNLPGQPKSIKETLEGVKDAEGNVVVHGIFASVPYCIQLLEGPYVETAPEVVAAFRPKSARRDVSE</sequence>
<reference key="1">
    <citation type="journal article" date="1993" name="DNA Seq.">
        <title>Five open reading frames upstream of the dnaK gene of E. coli.</title>
        <authorList>
            <person name="James R."/>
            <person name="Dean D.O."/>
            <person name="Debbage J."/>
        </authorList>
    </citation>
    <scope>NUCLEOTIDE SEQUENCE [GENOMIC DNA]</scope>
</reference>
<reference key="2">
    <citation type="journal article" date="1992" name="Nucleic Acids Res.">
        <title>Systematic sequencing of the Escherichia coli genome: analysis of the 0-2.4 min region.</title>
        <authorList>
            <person name="Yura T."/>
            <person name="Mori H."/>
            <person name="Nagai H."/>
            <person name="Nagata T."/>
            <person name="Ishihama A."/>
            <person name="Fujita N."/>
            <person name="Isono K."/>
            <person name="Mizobuchi K."/>
            <person name="Nakata A."/>
        </authorList>
    </citation>
    <scope>NUCLEOTIDE SEQUENCE [LARGE SCALE GENOMIC DNA]</scope>
    <source>
        <strain>K12</strain>
    </source>
</reference>
<reference key="3">
    <citation type="journal article" date="1997" name="Science">
        <title>The complete genome sequence of Escherichia coli K-12.</title>
        <authorList>
            <person name="Blattner F.R."/>
            <person name="Plunkett G. III"/>
            <person name="Bloch C.A."/>
            <person name="Perna N.T."/>
            <person name="Burland V."/>
            <person name="Riley M."/>
            <person name="Collado-Vides J."/>
            <person name="Glasner J.D."/>
            <person name="Rode C.K."/>
            <person name="Mayhew G.F."/>
            <person name="Gregor J."/>
            <person name="Davis N.W."/>
            <person name="Kirkpatrick H.A."/>
            <person name="Goeden M.A."/>
            <person name="Rose D.J."/>
            <person name="Mau B."/>
            <person name="Shao Y."/>
        </authorList>
    </citation>
    <scope>NUCLEOTIDE SEQUENCE [LARGE SCALE GENOMIC DNA]</scope>
    <source>
        <strain>K12 / MG1655 / ATCC 47076</strain>
    </source>
</reference>
<reference key="4">
    <citation type="journal article" date="2006" name="Mol. Syst. Biol.">
        <title>Highly accurate genome sequences of Escherichia coli K-12 strains MG1655 and W3110.</title>
        <authorList>
            <person name="Hayashi K."/>
            <person name="Morooka N."/>
            <person name="Yamamoto Y."/>
            <person name="Fujita K."/>
            <person name="Isono K."/>
            <person name="Choi S."/>
            <person name="Ohtsubo E."/>
            <person name="Baba T."/>
            <person name="Wanner B.L."/>
            <person name="Mori H."/>
            <person name="Horiuchi T."/>
        </authorList>
    </citation>
    <scope>NUCLEOTIDE SEQUENCE [LARGE SCALE GENOMIC DNA]</scope>
    <scope>SEQUENCE REVISION</scope>
    <source>
        <strain>K12 / W3110 / ATCC 27325 / DSM 5911</strain>
    </source>
</reference>
<reference key="5">
    <citation type="journal article" date="2002" name="J. Biol. Chem.">
        <title>In vivo interactions between gene products involved in the final stages of molybdenum cofactor biosynthesis in Escherichia coli.</title>
        <authorList>
            <person name="Magalon A."/>
            <person name="Frixon C."/>
            <person name="Pommier J."/>
            <person name="Giordano G."/>
            <person name="Blasco F."/>
        </authorList>
    </citation>
    <scope>INTERACTION WITH MOEA AND MOBB</scope>
    <source>
        <strain>K12 / MC4100 / ATCC 35695 / DSM 6574</strain>
    </source>
</reference>
<reference key="6">
    <citation type="journal article" date="2005" name="J. Biol. Chem.">
        <title>In vitro molybdenum ligation to molybdopterin using purified components.</title>
        <authorList>
            <person name="Nichols J.D."/>
            <person name="Rajagopalan K.V."/>
        </authorList>
    </citation>
    <scope>FUNCTION</scope>
    <scope>CATALYTIC ACTIVITY</scope>
</reference>
<reference key="7">
    <citation type="journal article" date="2000" name="J. Biol. Chem.">
        <title>Crystal structure of the gephyrin-related molybdenum cofactor biosynthesis protein MogA from Escherichia coli.</title>
        <authorList>
            <person name="Liu M.T.W."/>
            <person name="Wuebbens M.M."/>
            <person name="Rajagopalan K.V."/>
            <person name="Schindelin H."/>
        </authorList>
    </citation>
    <scope>X-RAY CRYSTALLOGRAPHY (1.45 ANGSTROMS)</scope>
    <scope>SUBUNIT</scope>
    <scope>MUTAGENESIS OF ASP-49 AND ASP-82</scope>
</reference>
<feature type="chain" id="PRO_0000170982" description="Molybdopterin adenylyltransferase">
    <location>
        <begin position="1"/>
        <end position="195"/>
    </location>
</feature>
<feature type="mutagenesis site" description="Loss of activity." evidence="1">
    <original>D</original>
    <variation>A</variation>
    <location>
        <position position="49"/>
    </location>
</feature>
<feature type="mutagenesis site" description="Loss of activity." evidence="1">
    <original>D</original>
    <variation>A</variation>
    <location>
        <position position="82"/>
    </location>
</feature>
<feature type="strand" evidence="5">
    <location>
        <begin position="4"/>
        <end position="12"/>
    </location>
</feature>
<feature type="helix" evidence="5">
    <location>
        <begin position="24"/>
        <end position="35"/>
    </location>
</feature>
<feature type="strand" evidence="5">
    <location>
        <begin position="40"/>
        <end position="49"/>
    </location>
</feature>
<feature type="helix" evidence="5">
    <location>
        <begin position="51"/>
        <end position="63"/>
    </location>
</feature>
<feature type="strand" evidence="5">
    <location>
        <begin position="68"/>
        <end position="74"/>
    </location>
</feature>
<feature type="strand" evidence="5">
    <location>
        <begin position="77"/>
        <end position="79"/>
    </location>
</feature>
<feature type="helix" evidence="5">
    <location>
        <begin position="84"/>
        <end position="90"/>
    </location>
</feature>
<feature type="strand" evidence="5">
    <location>
        <begin position="93"/>
        <end position="95"/>
    </location>
</feature>
<feature type="helix" evidence="5">
    <location>
        <begin position="97"/>
        <end position="108"/>
    </location>
</feature>
<feature type="helix" evidence="5">
    <location>
        <begin position="112"/>
        <end position="116"/>
    </location>
</feature>
<feature type="strand" evidence="5">
    <location>
        <begin position="121"/>
        <end position="124"/>
    </location>
</feature>
<feature type="strand" evidence="5">
    <location>
        <begin position="127"/>
        <end position="132"/>
    </location>
</feature>
<feature type="helix" evidence="5">
    <location>
        <begin position="136"/>
        <end position="144"/>
    </location>
</feature>
<feature type="strand" evidence="5">
    <location>
        <begin position="145"/>
        <end position="147"/>
    </location>
</feature>
<feature type="strand" evidence="5">
    <location>
        <begin position="153"/>
        <end position="156"/>
    </location>
</feature>
<feature type="helix" evidence="5">
    <location>
        <begin position="158"/>
        <end position="161"/>
    </location>
</feature>
<feature type="helix" evidence="5">
    <location>
        <begin position="162"/>
        <end position="168"/>
    </location>
</feature>
<feature type="turn" evidence="5">
    <location>
        <begin position="178"/>
        <end position="180"/>
    </location>
</feature>
<feature type="helix" evidence="5">
    <location>
        <begin position="187"/>
        <end position="189"/>
    </location>
</feature>
<proteinExistence type="evidence at protein level"/>
<name>MOG_ECOLI</name>
<gene>
    <name type="primary">mog</name>
    <name type="synonym">chlG</name>
    <name type="synonym">mogA</name>
    <name type="synonym">yaaG</name>
    <name type="ordered locus">b0009</name>
    <name type="ordered locus">JW0008</name>
</gene>
<protein>
    <recommendedName>
        <fullName>Molybdopterin adenylyltransferase</fullName>
        <shortName>MPT adenylyltransferase</shortName>
        <ecNumber evidence="3">2.7.7.75</ecNumber>
    </recommendedName>
</protein>
<accession>P0AF03</accession>
<accession>P28694</accession>
<accession>Q8KMY3</accession>
<evidence type="ECO:0000269" key="1">
    <source>
    </source>
</evidence>
<evidence type="ECO:0000269" key="2">
    <source>
    </source>
</evidence>
<evidence type="ECO:0000269" key="3">
    <source>
    </source>
</evidence>
<evidence type="ECO:0000305" key="4"/>
<evidence type="ECO:0007829" key="5">
    <source>
        <dbReference type="PDB" id="1DI6"/>
    </source>
</evidence>
<organism>
    <name type="scientific">Escherichia coli (strain K12)</name>
    <dbReference type="NCBI Taxonomy" id="83333"/>
    <lineage>
        <taxon>Bacteria</taxon>
        <taxon>Pseudomonadati</taxon>
        <taxon>Pseudomonadota</taxon>
        <taxon>Gammaproteobacteria</taxon>
        <taxon>Enterobacterales</taxon>
        <taxon>Enterobacteriaceae</taxon>
        <taxon>Escherichia</taxon>
    </lineage>
</organism>